<gene>
    <name evidence="1" type="primary">apt</name>
    <name type="ordered locus">HI_1230</name>
</gene>
<accession>P43856</accession>
<name>APT_HAEIN</name>
<dbReference type="EC" id="2.4.2.7" evidence="1"/>
<dbReference type="EMBL" id="L42023">
    <property type="protein sequence ID" value="AAC22883.1"/>
    <property type="molecule type" value="Genomic_DNA"/>
</dbReference>
<dbReference type="PIR" id="G64111">
    <property type="entry name" value="G64111"/>
</dbReference>
<dbReference type="RefSeq" id="NP_439386.1">
    <property type="nucleotide sequence ID" value="NC_000907.1"/>
</dbReference>
<dbReference type="SMR" id="P43856"/>
<dbReference type="STRING" id="71421.HI_1230"/>
<dbReference type="EnsemblBacteria" id="AAC22883">
    <property type="protein sequence ID" value="AAC22883"/>
    <property type="gene ID" value="HI_1230"/>
</dbReference>
<dbReference type="KEGG" id="hin:HI_1230"/>
<dbReference type="PATRIC" id="fig|71421.8.peg.1282"/>
<dbReference type="eggNOG" id="COG0503">
    <property type="taxonomic scope" value="Bacteria"/>
</dbReference>
<dbReference type="HOGENOM" id="CLU_063339_3_0_6"/>
<dbReference type="OrthoDB" id="9803963at2"/>
<dbReference type="PhylomeDB" id="P43856"/>
<dbReference type="BioCyc" id="HINF71421:G1GJ1-1261-MONOMER"/>
<dbReference type="UniPathway" id="UPA00588">
    <property type="reaction ID" value="UER00646"/>
</dbReference>
<dbReference type="Proteomes" id="UP000000579">
    <property type="component" value="Chromosome"/>
</dbReference>
<dbReference type="GO" id="GO:0005829">
    <property type="term" value="C:cytosol"/>
    <property type="evidence" value="ECO:0000318"/>
    <property type="project" value="GO_Central"/>
</dbReference>
<dbReference type="GO" id="GO:0003999">
    <property type="term" value="F:adenine phosphoribosyltransferase activity"/>
    <property type="evidence" value="ECO:0000318"/>
    <property type="project" value="GO_Central"/>
</dbReference>
<dbReference type="GO" id="GO:0006168">
    <property type="term" value="P:adenine salvage"/>
    <property type="evidence" value="ECO:0007669"/>
    <property type="project" value="InterPro"/>
</dbReference>
<dbReference type="GO" id="GO:0044209">
    <property type="term" value="P:AMP salvage"/>
    <property type="evidence" value="ECO:0007669"/>
    <property type="project" value="UniProtKB-UniRule"/>
</dbReference>
<dbReference type="GO" id="GO:0006166">
    <property type="term" value="P:purine ribonucleoside salvage"/>
    <property type="evidence" value="ECO:0007669"/>
    <property type="project" value="UniProtKB-KW"/>
</dbReference>
<dbReference type="CDD" id="cd06223">
    <property type="entry name" value="PRTases_typeI"/>
    <property type="match status" value="1"/>
</dbReference>
<dbReference type="FunFam" id="3.40.50.2020:FF:000004">
    <property type="entry name" value="Adenine phosphoribosyltransferase"/>
    <property type="match status" value="1"/>
</dbReference>
<dbReference type="Gene3D" id="3.40.50.2020">
    <property type="match status" value="1"/>
</dbReference>
<dbReference type="HAMAP" id="MF_00004">
    <property type="entry name" value="Aden_phosphoribosyltr"/>
    <property type="match status" value="1"/>
</dbReference>
<dbReference type="InterPro" id="IPR005764">
    <property type="entry name" value="Ade_phspho_trans"/>
</dbReference>
<dbReference type="InterPro" id="IPR050120">
    <property type="entry name" value="Adenine_PRTase"/>
</dbReference>
<dbReference type="InterPro" id="IPR000836">
    <property type="entry name" value="PRibTrfase_dom"/>
</dbReference>
<dbReference type="InterPro" id="IPR029057">
    <property type="entry name" value="PRTase-like"/>
</dbReference>
<dbReference type="NCBIfam" id="TIGR01090">
    <property type="entry name" value="apt"/>
    <property type="match status" value="1"/>
</dbReference>
<dbReference type="NCBIfam" id="NF002632">
    <property type="entry name" value="PRK02304.1-1"/>
    <property type="match status" value="1"/>
</dbReference>
<dbReference type="NCBIfam" id="NF002634">
    <property type="entry name" value="PRK02304.1-3"/>
    <property type="match status" value="1"/>
</dbReference>
<dbReference type="NCBIfam" id="NF002636">
    <property type="entry name" value="PRK02304.1-5"/>
    <property type="match status" value="1"/>
</dbReference>
<dbReference type="PANTHER" id="PTHR11776">
    <property type="entry name" value="ADENINE PHOSPHORIBOSYLTRANSFERASE"/>
    <property type="match status" value="1"/>
</dbReference>
<dbReference type="PANTHER" id="PTHR11776:SF7">
    <property type="entry name" value="PHOSPHORIBOSYLTRANSFERASE DOMAIN-CONTAINING PROTEIN"/>
    <property type="match status" value="1"/>
</dbReference>
<dbReference type="Pfam" id="PF00156">
    <property type="entry name" value="Pribosyltran"/>
    <property type="match status" value="1"/>
</dbReference>
<dbReference type="SUPFAM" id="SSF53271">
    <property type="entry name" value="PRTase-like"/>
    <property type="match status" value="1"/>
</dbReference>
<dbReference type="PROSITE" id="PS00103">
    <property type="entry name" value="PUR_PYR_PR_TRANSFER"/>
    <property type="match status" value="1"/>
</dbReference>
<sequence length="180" mass="19710">MTTQLDLIKSSIKSIPNYPKEGIIFRDITTLLEVPAAFKATIDLIVEQYRDKGITKVLGTESRGFIFGAPVALALGLPFELVRKPKKLPRETISQSYQLEYGQDTLEMHVDAISEGDNVLIIDDLLATGGTVEATVKLVQRLGGAVKHAAFVINLPELGGEKRLNNLGVDCYTLVNFEGH</sequence>
<organism>
    <name type="scientific">Haemophilus influenzae (strain ATCC 51907 / DSM 11121 / KW20 / Rd)</name>
    <dbReference type="NCBI Taxonomy" id="71421"/>
    <lineage>
        <taxon>Bacteria</taxon>
        <taxon>Pseudomonadati</taxon>
        <taxon>Pseudomonadota</taxon>
        <taxon>Gammaproteobacteria</taxon>
        <taxon>Pasteurellales</taxon>
        <taxon>Pasteurellaceae</taxon>
        <taxon>Haemophilus</taxon>
    </lineage>
</organism>
<proteinExistence type="inferred from homology"/>
<protein>
    <recommendedName>
        <fullName evidence="1">Adenine phosphoribosyltransferase</fullName>
        <shortName evidence="1">APRT</shortName>
        <ecNumber evidence="1">2.4.2.7</ecNumber>
    </recommendedName>
</protein>
<evidence type="ECO:0000255" key="1">
    <source>
        <dbReference type="HAMAP-Rule" id="MF_00004"/>
    </source>
</evidence>
<feature type="chain" id="PRO_0000149391" description="Adenine phosphoribosyltransferase">
    <location>
        <begin position="1"/>
        <end position="180"/>
    </location>
</feature>
<keyword id="KW-0963">Cytoplasm</keyword>
<keyword id="KW-0328">Glycosyltransferase</keyword>
<keyword id="KW-0660">Purine salvage</keyword>
<keyword id="KW-1185">Reference proteome</keyword>
<keyword id="KW-0808">Transferase</keyword>
<reference key="1">
    <citation type="journal article" date="1995" name="Science">
        <title>Whole-genome random sequencing and assembly of Haemophilus influenzae Rd.</title>
        <authorList>
            <person name="Fleischmann R.D."/>
            <person name="Adams M.D."/>
            <person name="White O."/>
            <person name="Clayton R.A."/>
            <person name="Kirkness E.F."/>
            <person name="Kerlavage A.R."/>
            <person name="Bult C.J."/>
            <person name="Tomb J.-F."/>
            <person name="Dougherty B.A."/>
            <person name="Merrick J.M."/>
            <person name="McKenney K."/>
            <person name="Sutton G.G."/>
            <person name="FitzHugh W."/>
            <person name="Fields C.A."/>
            <person name="Gocayne J.D."/>
            <person name="Scott J.D."/>
            <person name="Shirley R."/>
            <person name="Liu L.-I."/>
            <person name="Glodek A."/>
            <person name="Kelley J.M."/>
            <person name="Weidman J.F."/>
            <person name="Phillips C.A."/>
            <person name="Spriggs T."/>
            <person name="Hedblom E."/>
            <person name="Cotton M.D."/>
            <person name="Utterback T.R."/>
            <person name="Hanna M.C."/>
            <person name="Nguyen D.T."/>
            <person name="Saudek D.M."/>
            <person name="Brandon R.C."/>
            <person name="Fine L.D."/>
            <person name="Fritchman J.L."/>
            <person name="Fuhrmann J.L."/>
            <person name="Geoghagen N.S.M."/>
            <person name="Gnehm C.L."/>
            <person name="McDonald L.A."/>
            <person name="Small K.V."/>
            <person name="Fraser C.M."/>
            <person name="Smith H.O."/>
            <person name="Venter J.C."/>
        </authorList>
    </citation>
    <scope>NUCLEOTIDE SEQUENCE [LARGE SCALE GENOMIC DNA]</scope>
    <source>
        <strain>ATCC 51907 / DSM 11121 / KW20 / Rd</strain>
    </source>
</reference>
<comment type="function">
    <text evidence="1">Catalyzes a salvage reaction resulting in the formation of AMP, that is energically less costly than de novo synthesis.</text>
</comment>
<comment type="catalytic activity">
    <reaction evidence="1">
        <text>AMP + diphosphate = 5-phospho-alpha-D-ribose 1-diphosphate + adenine</text>
        <dbReference type="Rhea" id="RHEA:16609"/>
        <dbReference type="ChEBI" id="CHEBI:16708"/>
        <dbReference type="ChEBI" id="CHEBI:33019"/>
        <dbReference type="ChEBI" id="CHEBI:58017"/>
        <dbReference type="ChEBI" id="CHEBI:456215"/>
        <dbReference type="EC" id="2.4.2.7"/>
    </reaction>
</comment>
<comment type="pathway">
    <text evidence="1">Purine metabolism; AMP biosynthesis via salvage pathway; AMP from adenine: step 1/1.</text>
</comment>
<comment type="subunit">
    <text evidence="1">Homodimer.</text>
</comment>
<comment type="subcellular location">
    <subcellularLocation>
        <location evidence="1">Cytoplasm</location>
    </subcellularLocation>
</comment>
<comment type="similarity">
    <text evidence="1">Belongs to the purine/pyrimidine phosphoribosyltransferase family.</text>
</comment>